<keyword id="KW-0687">Ribonucleoprotein</keyword>
<keyword id="KW-0689">Ribosomal protein</keyword>
<sequence>MTAANQNYGTGRRKSSSARVFIKPGNGNITINQRSLDVYFGRETSRMVVRQPLELVELLDKLDLYITVKGGGISGQAGAIRHGITRALMEYDETLRPALRAAGFVTRDARRVERKKVGLHKARRRPQYSKR</sequence>
<protein>
    <recommendedName>
        <fullName evidence="1">Small ribosomal subunit protein uS9</fullName>
    </recommendedName>
    <alternativeName>
        <fullName evidence="2">30S ribosomal protein S9</fullName>
    </alternativeName>
</protein>
<feature type="chain" id="PRO_1000128066" description="Small ribosomal subunit protein uS9">
    <location>
        <begin position="1"/>
        <end position="131"/>
    </location>
</feature>
<accession>B3H130</accession>
<evidence type="ECO:0000255" key="1">
    <source>
        <dbReference type="HAMAP-Rule" id="MF_00532"/>
    </source>
</evidence>
<evidence type="ECO:0000305" key="2"/>
<comment type="similarity">
    <text evidence="1">Belongs to the universal ribosomal protein uS9 family.</text>
</comment>
<dbReference type="EMBL" id="CP001091">
    <property type="protein sequence ID" value="ACE61299.1"/>
    <property type="molecule type" value="Genomic_DNA"/>
</dbReference>
<dbReference type="RefSeq" id="WP_005596852.1">
    <property type="nucleotide sequence ID" value="NC_010939.1"/>
</dbReference>
<dbReference type="SMR" id="B3H130"/>
<dbReference type="GeneID" id="48598790"/>
<dbReference type="KEGG" id="apa:APP7_0647"/>
<dbReference type="HOGENOM" id="CLU_046483_2_1_6"/>
<dbReference type="Proteomes" id="UP000001226">
    <property type="component" value="Chromosome"/>
</dbReference>
<dbReference type="GO" id="GO:0022627">
    <property type="term" value="C:cytosolic small ribosomal subunit"/>
    <property type="evidence" value="ECO:0007669"/>
    <property type="project" value="TreeGrafter"/>
</dbReference>
<dbReference type="GO" id="GO:0003723">
    <property type="term" value="F:RNA binding"/>
    <property type="evidence" value="ECO:0007669"/>
    <property type="project" value="TreeGrafter"/>
</dbReference>
<dbReference type="GO" id="GO:0003735">
    <property type="term" value="F:structural constituent of ribosome"/>
    <property type="evidence" value="ECO:0007669"/>
    <property type="project" value="InterPro"/>
</dbReference>
<dbReference type="GO" id="GO:0006412">
    <property type="term" value="P:translation"/>
    <property type="evidence" value="ECO:0007669"/>
    <property type="project" value="UniProtKB-UniRule"/>
</dbReference>
<dbReference type="FunFam" id="3.30.230.10:FF:000001">
    <property type="entry name" value="30S ribosomal protein S9"/>
    <property type="match status" value="1"/>
</dbReference>
<dbReference type="Gene3D" id="3.30.230.10">
    <property type="match status" value="1"/>
</dbReference>
<dbReference type="HAMAP" id="MF_00532_B">
    <property type="entry name" value="Ribosomal_uS9_B"/>
    <property type="match status" value="1"/>
</dbReference>
<dbReference type="InterPro" id="IPR020568">
    <property type="entry name" value="Ribosomal_Su5_D2-typ_SF"/>
</dbReference>
<dbReference type="InterPro" id="IPR000754">
    <property type="entry name" value="Ribosomal_uS9"/>
</dbReference>
<dbReference type="InterPro" id="IPR023035">
    <property type="entry name" value="Ribosomal_uS9_bac/plastid"/>
</dbReference>
<dbReference type="InterPro" id="IPR020574">
    <property type="entry name" value="Ribosomal_uS9_CS"/>
</dbReference>
<dbReference type="InterPro" id="IPR014721">
    <property type="entry name" value="Ribsml_uS5_D2-typ_fold_subgr"/>
</dbReference>
<dbReference type="NCBIfam" id="NF001099">
    <property type="entry name" value="PRK00132.1"/>
    <property type="match status" value="1"/>
</dbReference>
<dbReference type="PANTHER" id="PTHR21569">
    <property type="entry name" value="RIBOSOMAL PROTEIN S9"/>
    <property type="match status" value="1"/>
</dbReference>
<dbReference type="PANTHER" id="PTHR21569:SF1">
    <property type="entry name" value="SMALL RIBOSOMAL SUBUNIT PROTEIN US9M"/>
    <property type="match status" value="1"/>
</dbReference>
<dbReference type="Pfam" id="PF00380">
    <property type="entry name" value="Ribosomal_S9"/>
    <property type="match status" value="1"/>
</dbReference>
<dbReference type="SUPFAM" id="SSF54211">
    <property type="entry name" value="Ribosomal protein S5 domain 2-like"/>
    <property type="match status" value="1"/>
</dbReference>
<dbReference type="PROSITE" id="PS00360">
    <property type="entry name" value="RIBOSOMAL_S9"/>
    <property type="match status" value="1"/>
</dbReference>
<reference key="1">
    <citation type="submission" date="2008-06" db="EMBL/GenBank/DDBJ databases">
        <title>Genome and proteome analysis of A. pleuropneumoniae serotype 7.</title>
        <authorList>
            <person name="Linke B."/>
            <person name="Buettner F."/>
            <person name="Martinez-Arias R."/>
            <person name="Goesmann A."/>
            <person name="Baltes N."/>
            <person name="Tegetmeyer H."/>
            <person name="Singh M."/>
            <person name="Gerlach G.F."/>
        </authorList>
    </citation>
    <scope>NUCLEOTIDE SEQUENCE [LARGE SCALE GENOMIC DNA]</scope>
    <source>
        <strain>AP76</strain>
    </source>
</reference>
<organism>
    <name type="scientific">Actinobacillus pleuropneumoniae serotype 7 (strain AP76)</name>
    <dbReference type="NCBI Taxonomy" id="537457"/>
    <lineage>
        <taxon>Bacteria</taxon>
        <taxon>Pseudomonadati</taxon>
        <taxon>Pseudomonadota</taxon>
        <taxon>Gammaproteobacteria</taxon>
        <taxon>Pasteurellales</taxon>
        <taxon>Pasteurellaceae</taxon>
        <taxon>Actinobacillus</taxon>
    </lineage>
</organism>
<proteinExistence type="inferred from homology"/>
<gene>
    <name evidence="1" type="primary">rpsI</name>
    <name type="ordered locus">APP7_0647</name>
</gene>
<name>RS9_ACTP7</name>